<sequence length="294" mass="31996">MQTFHHQDTGSEDFRQNTMDEKWADDDEFSTPQITQNADGTKTIVTHRMDDGKKYKRSVTIKNQSVTEKVLNCVAERSKWTKYGKELGAPPGPNRMTTTIGEDIVFVLGLKSDQPEEEVEEEEAAAAAPRVGEDKGVKCRLCQGPHFTSKCPYKETLGGSTAAGGMGRSLGGDEPAGAAKTGGYVPPHLRNKGPGGPGGPGGAAGGRSDDDDELTLRVTNLSEEATDDDLRRMFGKYGMINRVYVAKDRDTGRPRGFAFVTYTLKSHAQAALEAMDGHGFDNLIMKVDYSKKRN</sequence>
<protein>
    <recommendedName>
        <fullName evidence="1">Eukaryotic translation initiation factor 3 subunit G</fullName>
        <shortName evidence="1">eIF3g</shortName>
    </recommendedName>
    <alternativeName>
        <fullName evidence="1">Eukaryotic translation initiation factor 3 RNA-binding subunit</fullName>
        <shortName evidence="1">eIF-3 RNA-binding subunit</shortName>
    </alternativeName>
    <alternativeName>
        <fullName evidence="1">Translation initiation factor eIF3 p33 subunit homolog</fullName>
        <shortName evidence="1">eIF3 p33 homolog</shortName>
    </alternativeName>
</protein>
<proteinExistence type="inferred from homology"/>
<name>EIF3G_YARLI</name>
<keyword id="KW-0963">Cytoplasm</keyword>
<keyword id="KW-0396">Initiation factor</keyword>
<keyword id="KW-0648">Protein biosynthesis</keyword>
<keyword id="KW-1185">Reference proteome</keyword>
<keyword id="KW-0694">RNA-binding</keyword>
<accession>Q6C747</accession>
<reference key="1">
    <citation type="journal article" date="2004" name="Nature">
        <title>Genome evolution in yeasts.</title>
        <authorList>
            <person name="Dujon B."/>
            <person name="Sherman D."/>
            <person name="Fischer G."/>
            <person name="Durrens P."/>
            <person name="Casaregola S."/>
            <person name="Lafontaine I."/>
            <person name="de Montigny J."/>
            <person name="Marck C."/>
            <person name="Neuveglise C."/>
            <person name="Talla E."/>
            <person name="Goffard N."/>
            <person name="Frangeul L."/>
            <person name="Aigle M."/>
            <person name="Anthouard V."/>
            <person name="Babour A."/>
            <person name="Barbe V."/>
            <person name="Barnay S."/>
            <person name="Blanchin S."/>
            <person name="Beckerich J.-M."/>
            <person name="Beyne E."/>
            <person name="Bleykasten C."/>
            <person name="Boisrame A."/>
            <person name="Boyer J."/>
            <person name="Cattolico L."/>
            <person name="Confanioleri F."/>
            <person name="de Daruvar A."/>
            <person name="Despons L."/>
            <person name="Fabre E."/>
            <person name="Fairhead C."/>
            <person name="Ferry-Dumazet H."/>
            <person name="Groppi A."/>
            <person name="Hantraye F."/>
            <person name="Hennequin C."/>
            <person name="Jauniaux N."/>
            <person name="Joyet P."/>
            <person name="Kachouri R."/>
            <person name="Kerrest A."/>
            <person name="Koszul R."/>
            <person name="Lemaire M."/>
            <person name="Lesur I."/>
            <person name="Ma L."/>
            <person name="Muller H."/>
            <person name="Nicaud J.-M."/>
            <person name="Nikolski M."/>
            <person name="Oztas S."/>
            <person name="Ozier-Kalogeropoulos O."/>
            <person name="Pellenz S."/>
            <person name="Potier S."/>
            <person name="Richard G.-F."/>
            <person name="Straub M.-L."/>
            <person name="Suleau A."/>
            <person name="Swennen D."/>
            <person name="Tekaia F."/>
            <person name="Wesolowski-Louvel M."/>
            <person name="Westhof E."/>
            <person name="Wirth B."/>
            <person name="Zeniou-Meyer M."/>
            <person name="Zivanovic Y."/>
            <person name="Bolotin-Fukuhara M."/>
            <person name="Thierry A."/>
            <person name="Bouchier C."/>
            <person name="Caudron B."/>
            <person name="Scarpelli C."/>
            <person name="Gaillardin C."/>
            <person name="Weissenbach J."/>
            <person name="Wincker P."/>
            <person name="Souciet J.-L."/>
        </authorList>
    </citation>
    <scope>NUCLEOTIDE SEQUENCE [LARGE SCALE GENOMIC DNA]</scope>
    <source>
        <strain>CLIB 122 / E 150</strain>
    </source>
</reference>
<comment type="function">
    <text evidence="1">RNA-binding component of the eukaryotic translation initiation factor 3 (eIF-3) complex, which is involved in protein synthesis of a specialized repertoire of mRNAs and, together with other initiation factors, stimulates binding of mRNA and methionyl-tRNAi to the 40S ribosome. The eIF-3 complex specifically targets and initiates translation of a subset of mRNAs involved in cell proliferation. This subunit can bind 18S rRNA.</text>
</comment>
<comment type="subunit">
    <text evidence="1">Component of the eukaryotic translation initiation factor 3 (eIF-3) complex.</text>
</comment>
<comment type="subcellular location">
    <subcellularLocation>
        <location evidence="1">Cytoplasm</location>
    </subcellularLocation>
</comment>
<comment type="similarity">
    <text evidence="1">Belongs to the eIF-3 subunit G family.</text>
</comment>
<dbReference type="EMBL" id="CR382131">
    <property type="protein sequence ID" value="CAG79094.1"/>
    <property type="molecule type" value="Genomic_DNA"/>
</dbReference>
<dbReference type="RefSeq" id="XP_503515.1">
    <property type="nucleotide sequence ID" value="XM_503515.1"/>
</dbReference>
<dbReference type="SMR" id="Q6C747"/>
<dbReference type="FunCoup" id="Q6C747">
    <property type="interactions" value="1126"/>
</dbReference>
<dbReference type="STRING" id="284591.Q6C747"/>
<dbReference type="EnsemblFungi" id="CAG79094">
    <property type="protein sequence ID" value="CAG79094"/>
    <property type="gene ID" value="YALI0_E03828g"/>
</dbReference>
<dbReference type="KEGG" id="yli:2912167"/>
<dbReference type="VEuPathDB" id="FungiDB:YALI0_E03828g"/>
<dbReference type="HOGENOM" id="CLU_034595_0_0_1"/>
<dbReference type="InParanoid" id="Q6C747"/>
<dbReference type="OMA" id="ICQGDHF"/>
<dbReference type="OrthoDB" id="23796at4891"/>
<dbReference type="Proteomes" id="UP000001300">
    <property type="component" value="Chromosome E"/>
</dbReference>
<dbReference type="GO" id="GO:0016282">
    <property type="term" value="C:eukaryotic 43S preinitiation complex"/>
    <property type="evidence" value="ECO:0007669"/>
    <property type="project" value="UniProtKB-UniRule"/>
</dbReference>
<dbReference type="GO" id="GO:0033290">
    <property type="term" value="C:eukaryotic 48S preinitiation complex"/>
    <property type="evidence" value="ECO:0007669"/>
    <property type="project" value="UniProtKB-UniRule"/>
</dbReference>
<dbReference type="GO" id="GO:0071540">
    <property type="term" value="C:eukaryotic translation initiation factor 3 complex, eIF3e"/>
    <property type="evidence" value="ECO:0007669"/>
    <property type="project" value="EnsemblFungi"/>
</dbReference>
<dbReference type="GO" id="GO:0071541">
    <property type="term" value="C:eukaryotic translation initiation factor 3 complex, eIF3m"/>
    <property type="evidence" value="ECO:0007669"/>
    <property type="project" value="EnsemblFungi"/>
</dbReference>
<dbReference type="GO" id="GO:0043614">
    <property type="term" value="C:multi-eIF complex"/>
    <property type="evidence" value="ECO:0007669"/>
    <property type="project" value="EnsemblFungi"/>
</dbReference>
<dbReference type="GO" id="GO:0003723">
    <property type="term" value="F:RNA binding"/>
    <property type="evidence" value="ECO:0007669"/>
    <property type="project" value="UniProtKB-UniRule"/>
</dbReference>
<dbReference type="GO" id="GO:0003743">
    <property type="term" value="F:translation initiation factor activity"/>
    <property type="evidence" value="ECO:0007669"/>
    <property type="project" value="UniProtKB-UniRule"/>
</dbReference>
<dbReference type="GO" id="GO:0001732">
    <property type="term" value="P:formation of cytoplasmic translation initiation complex"/>
    <property type="evidence" value="ECO:0007669"/>
    <property type="project" value="UniProtKB-UniRule"/>
</dbReference>
<dbReference type="GO" id="GO:0002188">
    <property type="term" value="P:translation reinitiation"/>
    <property type="evidence" value="ECO:0007669"/>
    <property type="project" value="EnsemblFungi"/>
</dbReference>
<dbReference type="GO" id="GO:0006415">
    <property type="term" value="P:translational termination"/>
    <property type="evidence" value="ECO:0007669"/>
    <property type="project" value="EnsemblFungi"/>
</dbReference>
<dbReference type="CDD" id="cd12933">
    <property type="entry name" value="eIF3G"/>
    <property type="match status" value="1"/>
</dbReference>
<dbReference type="CDD" id="cd12408">
    <property type="entry name" value="RRM_eIF3G_like"/>
    <property type="match status" value="1"/>
</dbReference>
<dbReference type="Gene3D" id="3.30.70.330">
    <property type="match status" value="1"/>
</dbReference>
<dbReference type="HAMAP" id="MF_03006">
    <property type="entry name" value="eIF3g"/>
    <property type="match status" value="1"/>
</dbReference>
<dbReference type="InterPro" id="IPR017334">
    <property type="entry name" value="eIF3_g"/>
</dbReference>
<dbReference type="InterPro" id="IPR024675">
    <property type="entry name" value="eIF3g_N"/>
</dbReference>
<dbReference type="InterPro" id="IPR034240">
    <property type="entry name" value="eIF3G_RRM"/>
</dbReference>
<dbReference type="InterPro" id="IPR012677">
    <property type="entry name" value="Nucleotide-bd_a/b_plait_sf"/>
</dbReference>
<dbReference type="InterPro" id="IPR035979">
    <property type="entry name" value="RBD_domain_sf"/>
</dbReference>
<dbReference type="InterPro" id="IPR000504">
    <property type="entry name" value="RRM_dom"/>
</dbReference>
<dbReference type="PANTHER" id="PTHR10352">
    <property type="entry name" value="EUKARYOTIC TRANSLATION INITIATION FACTOR 3 SUBUNIT G"/>
    <property type="match status" value="1"/>
</dbReference>
<dbReference type="Pfam" id="PF12353">
    <property type="entry name" value="eIF3g"/>
    <property type="match status" value="1"/>
</dbReference>
<dbReference type="Pfam" id="PF00076">
    <property type="entry name" value="RRM_1"/>
    <property type="match status" value="1"/>
</dbReference>
<dbReference type="PIRSF" id="PIRSF037949">
    <property type="entry name" value="Transl_init_eIF-3_RNA-bind"/>
    <property type="match status" value="1"/>
</dbReference>
<dbReference type="SMART" id="SM00360">
    <property type="entry name" value="RRM"/>
    <property type="match status" value="1"/>
</dbReference>
<dbReference type="SUPFAM" id="SSF54928">
    <property type="entry name" value="RNA-binding domain, RBD"/>
    <property type="match status" value="1"/>
</dbReference>
<dbReference type="PROSITE" id="PS50102">
    <property type="entry name" value="RRM"/>
    <property type="match status" value="1"/>
</dbReference>
<feature type="chain" id="PRO_0000365451" description="Eukaryotic translation initiation factor 3 subunit G">
    <location>
        <begin position="1"/>
        <end position="294"/>
    </location>
</feature>
<feature type="domain" description="RRM" evidence="1">
    <location>
        <begin position="214"/>
        <end position="292"/>
    </location>
</feature>
<feature type="region of interest" description="Disordered" evidence="2">
    <location>
        <begin position="1"/>
        <end position="42"/>
    </location>
</feature>
<feature type="region of interest" description="Disordered" evidence="2">
    <location>
        <begin position="164"/>
        <end position="211"/>
    </location>
</feature>
<feature type="compositionally biased region" description="Basic and acidic residues" evidence="2">
    <location>
        <begin position="1"/>
        <end position="22"/>
    </location>
</feature>
<feature type="compositionally biased region" description="Polar residues" evidence="2">
    <location>
        <begin position="30"/>
        <end position="42"/>
    </location>
</feature>
<feature type="compositionally biased region" description="Gly residues" evidence="2">
    <location>
        <begin position="193"/>
        <end position="205"/>
    </location>
</feature>
<organism>
    <name type="scientific">Yarrowia lipolytica (strain CLIB 122 / E 150)</name>
    <name type="common">Yeast</name>
    <name type="synonym">Candida lipolytica</name>
    <dbReference type="NCBI Taxonomy" id="284591"/>
    <lineage>
        <taxon>Eukaryota</taxon>
        <taxon>Fungi</taxon>
        <taxon>Dikarya</taxon>
        <taxon>Ascomycota</taxon>
        <taxon>Saccharomycotina</taxon>
        <taxon>Dipodascomycetes</taxon>
        <taxon>Dipodascales</taxon>
        <taxon>Dipodascales incertae sedis</taxon>
        <taxon>Yarrowia</taxon>
    </lineage>
</organism>
<gene>
    <name evidence="1" type="primary">TIF35</name>
    <name type="ordered locus">YALI0E03828g</name>
</gene>
<evidence type="ECO:0000255" key="1">
    <source>
        <dbReference type="HAMAP-Rule" id="MF_03006"/>
    </source>
</evidence>
<evidence type="ECO:0000256" key="2">
    <source>
        <dbReference type="SAM" id="MobiDB-lite"/>
    </source>
</evidence>